<evidence type="ECO:0000255" key="1">
    <source>
        <dbReference type="HAMAP-Rule" id="MF_00454"/>
    </source>
</evidence>
<comment type="function">
    <text evidence="1">Fluoride-specific ion channel. Important for reducing fluoride concentration in the cell, thus reducing its toxicity.</text>
</comment>
<comment type="catalytic activity">
    <reaction evidence="1">
        <text>fluoride(in) = fluoride(out)</text>
        <dbReference type="Rhea" id="RHEA:76159"/>
        <dbReference type="ChEBI" id="CHEBI:17051"/>
    </reaction>
    <physiologicalReaction direction="left-to-right" evidence="1">
        <dbReference type="Rhea" id="RHEA:76160"/>
    </physiologicalReaction>
</comment>
<comment type="activity regulation">
    <text evidence="1">Na(+) is not transported, but it plays an essential structural role and its presence is essential for fluoride channel function.</text>
</comment>
<comment type="subcellular location">
    <subcellularLocation>
        <location evidence="1">Cell inner membrane</location>
        <topology evidence="1">Multi-pass membrane protein</topology>
    </subcellularLocation>
</comment>
<comment type="similarity">
    <text evidence="1">Belongs to the fluoride channel Fluc/FEX (TC 1.A.43) family.</text>
</comment>
<organism>
    <name type="scientific">Neisseria meningitidis serogroup B (strain ATCC BAA-335 / MC58)</name>
    <dbReference type="NCBI Taxonomy" id="122586"/>
    <lineage>
        <taxon>Bacteria</taxon>
        <taxon>Pseudomonadati</taxon>
        <taxon>Pseudomonadota</taxon>
        <taxon>Betaproteobacteria</taxon>
        <taxon>Neisseriales</taxon>
        <taxon>Neisseriaceae</taxon>
        <taxon>Neisseria</taxon>
    </lineage>
</organism>
<sequence>MLSNIIPLSIGAALGATARWLLNLAVPASIPPATGNLFANWIGAFLIGIFAETVNHPQWKLLLITGFLGSLTTLSGFSLETVTLLQLNRPASALANIFLHTAGSLLLTWLGLKIGAAVK</sequence>
<dbReference type="EMBL" id="AE002098">
    <property type="protein sequence ID" value="AAF41461.1"/>
    <property type="molecule type" value="Genomic_DNA"/>
</dbReference>
<dbReference type="PIR" id="C81125">
    <property type="entry name" value="C81125"/>
</dbReference>
<dbReference type="RefSeq" id="NP_274098.1">
    <property type="nucleotide sequence ID" value="NC_003112.2"/>
</dbReference>
<dbReference type="RefSeq" id="WP_002225263.1">
    <property type="nucleotide sequence ID" value="NC_003112.2"/>
</dbReference>
<dbReference type="SMR" id="Q9JZG6"/>
<dbReference type="FunCoup" id="Q9JZG6">
    <property type="interactions" value="216"/>
</dbReference>
<dbReference type="STRING" id="122586.NMB1065"/>
<dbReference type="PaxDb" id="122586-NMB1065"/>
<dbReference type="KEGG" id="nme:NMB1065"/>
<dbReference type="PATRIC" id="fig|122586.8.peg.1354"/>
<dbReference type="HOGENOM" id="CLU_114342_3_0_4"/>
<dbReference type="InParanoid" id="Q9JZG6"/>
<dbReference type="OrthoDB" id="9806299at2"/>
<dbReference type="Proteomes" id="UP000000425">
    <property type="component" value="Chromosome"/>
</dbReference>
<dbReference type="GO" id="GO:0005886">
    <property type="term" value="C:plasma membrane"/>
    <property type="evidence" value="ECO:0000318"/>
    <property type="project" value="GO_Central"/>
</dbReference>
<dbReference type="GO" id="GO:0062054">
    <property type="term" value="F:fluoride channel activity"/>
    <property type="evidence" value="ECO:0007669"/>
    <property type="project" value="UniProtKB-UniRule"/>
</dbReference>
<dbReference type="GO" id="GO:1903425">
    <property type="term" value="F:fluoride transmembrane transporter activity"/>
    <property type="evidence" value="ECO:0000318"/>
    <property type="project" value="GO_Central"/>
</dbReference>
<dbReference type="GO" id="GO:0046872">
    <property type="term" value="F:metal ion binding"/>
    <property type="evidence" value="ECO:0007669"/>
    <property type="project" value="UniProtKB-KW"/>
</dbReference>
<dbReference type="GO" id="GO:0140114">
    <property type="term" value="P:cellular detoxification of fluoride"/>
    <property type="evidence" value="ECO:0007669"/>
    <property type="project" value="UniProtKB-UniRule"/>
</dbReference>
<dbReference type="GO" id="GO:1903424">
    <property type="term" value="P:fluoride transmembrane transport"/>
    <property type="evidence" value="ECO:0000318"/>
    <property type="project" value="GO_Central"/>
</dbReference>
<dbReference type="HAMAP" id="MF_00454">
    <property type="entry name" value="FluC"/>
    <property type="match status" value="1"/>
</dbReference>
<dbReference type="InterPro" id="IPR003691">
    <property type="entry name" value="FluC"/>
</dbReference>
<dbReference type="NCBIfam" id="NF010826">
    <property type="entry name" value="PRK14230.1"/>
    <property type="match status" value="1"/>
</dbReference>
<dbReference type="PANTHER" id="PTHR28259">
    <property type="entry name" value="FLUORIDE EXPORT PROTEIN 1-RELATED"/>
    <property type="match status" value="1"/>
</dbReference>
<dbReference type="PANTHER" id="PTHR28259:SF1">
    <property type="entry name" value="FLUORIDE EXPORT PROTEIN 1-RELATED"/>
    <property type="match status" value="1"/>
</dbReference>
<dbReference type="Pfam" id="PF02537">
    <property type="entry name" value="CRCB"/>
    <property type="match status" value="1"/>
</dbReference>
<gene>
    <name evidence="1" type="primary">fluC</name>
    <name evidence="1" type="synonym">crcB</name>
    <name type="ordered locus">NMB1065</name>
</gene>
<accession>Q9JZG6</accession>
<keyword id="KW-0997">Cell inner membrane</keyword>
<keyword id="KW-1003">Cell membrane</keyword>
<keyword id="KW-0407">Ion channel</keyword>
<keyword id="KW-0406">Ion transport</keyword>
<keyword id="KW-0472">Membrane</keyword>
<keyword id="KW-0479">Metal-binding</keyword>
<keyword id="KW-1185">Reference proteome</keyword>
<keyword id="KW-0915">Sodium</keyword>
<keyword id="KW-0812">Transmembrane</keyword>
<keyword id="KW-1133">Transmembrane helix</keyword>
<keyword id="KW-0813">Transport</keyword>
<name>FLUC_NEIMB</name>
<feature type="chain" id="PRO_0000110141" description="Fluoride-specific ion channel FluC">
    <location>
        <begin position="1"/>
        <end position="119"/>
    </location>
</feature>
<feature type="transmembrane region" description="Helical" evidence="1">
    <location>
        <begin position="5"/>
        <end position="25"/>
    </location>
</feature>
<feature type="transmembrane region" description="Helical" evidence="1">
    <location>
        <begin position="30"/>
        <end position="50"/>
    </location>
</feature>
<feature type="transmembrane region" description="Helical" evidence="1">
    <location>
        <begin position="59"/>
        <end position="79"/>
    </location>
</feature>
<feature type="transmembrane region" description="Helical" evidence="1">
    <location>
        <begin position="97"/>
        <end position="117"/>
    </location>
</feature>
<feature type="binding site" evidence="1">
    <location>
        <position position="69"/>
    </location>
    <ligand>
        <name>Na(+)</name>
        <dbReference type="ChEBI" id="CHEBI:29101"/>
        <note>structural</note>
    </ligand>
</feature>
<feature type="binding site" evidence="1">
    <location>
        <position position="72"/>
    </location>
    <ligand>
        <name>Na(+)</name>
        <dbReference type="ChEBI" id="CHEBI:29101"/>
        <note>structural</note>
    </ligand>
</feature>
<proteinExistence type="inferred from homology"/>
<protein>
    <recommendedName>
        <fullName evidence="1">Fluoride-specific ion channel FluC</fullName>
    </recommendedName>
</protein>
<reference key="1">
    <citation type="journal article" date="2000" name="Science">
        <title>Complete genome sequence of Neisseria meningitidis serogroup B strain MC58.</title>
        <authorList>
            <person name="Tettelin H."/>
            <person name="Saunders N.J."/>
            <person name="Heidelberg J.F."/>
            <person name="Jeffries A.C."/>
            <person name="Nelson K.E."/>
            <person name="Eisen J.A."/>
            <person name="Ketchum K.A."/>
            <person name="Hood D.W."/>
            <person name="Peden J.F."/>
            <person name="Dodson R.J."/>
            <person name="Nelson W.C."/>
            <person name="Gwinn M.L."/>
            <person name="DeBoy R.T."/>
            <person name="Peterson J.D."/>
            <person name="Hickey E.K."/>
            <person name="Haft D.H."/>
            <person name="Salzberg S.L."/>
            <person name="White O."/>
            <person name="Fleischmann R.D."/>
            <person name="Dougherty B.A."/>
            <person name="Mason T.M."/>
            <person name="Ciecko A."/>
            <person name="Parksey D.S."/>
            <person name="Blair E."/>
            <person name="Cittone H."/>
            <person name="Clark E.B."/>
            <person name="Cotton M.D."/>
            <person name="Utterback T.R."/>
            <person name="Khouri H.M."/>
            <person name="Qin H."/>
            <person name="Vamathevan J.J."/>
            <person name="Gill J."/>
            <person name="Scarlato V."/>
            <person name="Masignani V."/>
            <person name="Pizza M."/>
            <person name="Grandi G."/>
            <person name="Sun L."/>
            <person name="Smith H.O."/>
            <person name="Fraser C.M."/>
            <person name="Moxon E.R."/>
            <person name="Rappuoli R."/>
            <person name="Venter J.C."/>
        </authorList>
    </citation>
    <scope>NUCLEOTIDE SEQUENCE [LARGE SCALE GENOMIC DNA]</scope>
    <source>
        <strain>ATCC BAA-335 / MC58</strain>
    </source>
</reference>